<evidence type="ECO:0000250" key="1">
    <source>
        <dbReference type="UniProtKB" id="P01308"/>
    </source>
</evidence>
<evidence type="ECO:0000255" key="2"/>
<evidence type="ECO:0000269" key="3">
    <source>
    </source>
</evidence>
<evidence type="ECO:0000269" key="4">
    <source>
    </source>
</evidence>
<evidence type="ECO:0000305" key="5"/>
<evidence type="ECO:0000312" key="6">
    <source>
        <dbReference type="EMBL" id="AAF45773.1"/>
    </source>
</evidence>
<evidence type="ECO:0000312" key="7">
    <source>
        <dbReference type="FlyBase" id="FBgn0044047"/>
    </source>
</evidence>
<evidence type="ECO:0000312" key="8">
    <source>
        <dbReference type="Proteomes" id="UP000000803"/>
    </source>
</evidence>
<name>INSL6_DROME</name>
<feature type="signal peptide" evidence="2">
    <location>
        <begin position="1"/>
        <end position="33"/>
    </location>
</feature>
<feature type="chain" id="PRO_0000016205" description="Insulin-like peptide 6" evidence="2">
    <location>
        <begin position="34"/>
        <end position="107"/>
    </location>
</feature>
<feature type="peptide" id="PRO_0000016206" description="Insulin-like peptide 6 B chain" evidence="2">
    <location>
        <begin position="34"/>
        <end position="66"/>
    </location>
</feature>
<feature type="propeptide" id="PRO_0000016207" description="Connecting peptide" evidence="2">
    <location>
        <begin position="67"/>
        <end position="76"/>
    </location>
</feature>
<feature type="peptide" id="PRO_0000016208" description="Insulin-like peptide 6 A chain" evidence="2">
    <location>
        <begin position="82"/>
        <end position="107"/>
    </location>
</feature>
<feature type="disulfide bond" description="Interchain (between B and A chains)" evidence="1">
    <location>
        <begin position="48"/>
        <end position="91"/>
    </location>
</feature>
<feature type="disulfide bond" description="Interchain (between B and A chains)" evidence="1">
    <location>
        <begin position="60"/>
        <end position="105"/>
    </location>
</feature>
<feature type="disulfide bond" evidence="1">
    <location>
        <begin position="90"/>
        <end position="96"/>
    </location>
</feature>
<gene>
    <name evidence="7" type="primary">Ilp6</name>
    <name evidence="7" type="ORF">CG14049</name>
</gene>
<dbReference type="EMBL" id="AE014298">
    <property type="protein sequence ID" value="AAF45773.1"/>
    <property type="molecule type" value="Genomic_DNA"/>
</dbReference>
<dbReference type="EMBL" id="BT088778">
    <property type="protein sequence ID" value="ACR82503.1"/>
    <property type="molecule type" value="mRNA"/>
</dbReference>
<dbReference type="RefSeq" id="NP_001188538.1">
    <property type="nucleotide sequence ID" value="NM_001201609.1"/>
</dbReference>
<dbReference type="RefSeq" id="NP_001188539.1">
    <property type="nucleotide sequence ID" value="NM_001201610.2"/>
</dbReference>
<dbReference type="RefSeq" id="NP_001259185.1">
    <property type="nucleotide sequence ID" value="NM_001272256.1"/>
</dbReference>
<dbReference type="RefSeq" id="NP_570000.1">
    <property type="nucleotide sequence ID" value="NM_130644.4"/>
</dbReference>
<dbReference type="BioGRID" id="57757">
    <property type="interactions" value="7"/>
</dbReference>
<dbReference type="FunCoup" id="Q9W4Z4">
    <property type="interactions" value="185"/>
</dbReference>
<dbReference type="IntAct" id="Q9W4Z4">
    <property type="interactions" value="4"/>
</dbReference>
<dbReference type="STRING" id="7227.FBpp0070390"/>
<dbReference type="PaxDb" id="7227-FBpp0070390"/>
<dbReference type="DNASU" id="31220"/>
<dbReference type="EnsemblMetazoa" id="FBtr0070406">
    <property type="protein sequence ID" value="FBpp0070390"/>
    <property type="gene ID" value="FBgn0044047"/>
</dbReference>
<dbReference type="EnsemblMetazoa" id="FBtr0303997">
    <property type="protein sequence ID" value="FBpp0292966"/>
    <property type="gene ID" value="FBgn0044047"/>
</dbReference>
<dbReference type="EnsemblMetazoa" id="FBtr0303998">
    <property type="protein sequence ID" value="FBpp0292967"/>
    <property type="gene ID" value="FBgn0044047"/>
</dbReference>
<dbReference type="EnsemblMetazoa" id="FBtr0333731">
    <property type="protein sequence ID" value="FBpp0305878"/>
    <property type="gene ID" value="FBgn0044047"/>
</dbReference>
<dbReference type="GeneID" id="31220"/>
<dbReference type="KEGG" id="dme:Dmel_CG14049"/>
<dbReference type="AGR" id="FB:FBgn0044047"/>
<dbReference type="CTD" id="31220"/>
<dbReference type="FlyBase" id="FBgn0044047">
    <property type="gene designation" value="Ilp6"/>
</dbReference>
<dbReference type="VEuPathDB" id="VectorBase:FBgn0044047"/>
<dbReference type="HOGENOM" id="CLU_2212610_0_0_1"/>
<dbReference type="InParanoid" id="Q9W4Z4"/>
<dbReference type="OMA" id="LEIKHRC"/>
<dbReference type="OrthoDB" id="6330326at2759"/>
<dbReference type="PhylomeDB" id="Q9W4Z4"/>
<dbReference type="Reactome" id="R-DME-110478">
    <property type="pathway name" value="Insulin signaling pathway"/>
</dbReference>
<dbReference type="SignaLink" id="Q9W4Z4"/>
<dbReference type="BioGRID-ORCS" id="31220">
    <property type="hits" value="0 hits in 1 CRISPR screen"/>
</dbReference>
<dbReference type="GenomeRNAi" id="31220"/>
<dbReference type="PRO" id="PR:Q9W4Z4"/>
<dbReference type="Proteomes" id="UP000000803">
    <property type="component" value="Chromosome X"/>
</dbReference>
<dbReference type="Bgee" id="FBgn0044047">
    <property type="expression patterns" value="Expressed in fat body cell in male reproductive gland and 103 other cell types or tissues"/>
</dbReference>
<dbReference type="ExpressionAtlas" id="Q9W4Z4">
    <property type="expression patterns" value="baseline and differential"/>
</dbReference>
<dbReference type="GO" id="GO:0005576">
    <property type="term" value="C:extracellular region"/>
    <property type="evidence" value="ECO:0000304"/>
    <property type="project" value="Reactome"/>
</dbReference>
<dbReference type="GO" id="GO:0005615">
    <property type="term" value="C:extracellular space"/>
    <property type="evidence" value="ECO:0000250"/>
    <property type="project" value="FlyBase"/>
</dbReference>
<dbReference type="GO" id="GO:0005158">
    <property type="term" value="F:insulin receptor binding"/>
    <property type="evidence" value="ECO:0000250"/>
    <property type="project" value="UniProtKB"/>
</dbReference>
<dbReference type="GO" id="GO:0009267">
    <property type="term" value="P:cellular response to starvation"/>
    <property type="evidence" value="ECO:0000315"/>
    <property type="project" value="FlyBase"/>
</dbReference>
<dbReference type="GO" id="GO:0008286">
    <property type="term" value="P:insulin receptor signaling pathway"/>
    <property type="evidence" value="ECO:0000315"/>
    <property type="project" value="FlyBase"/>
</dbReference>
<dbReference type="GO" id="GO:0040018">
    <property type="term" value="P:positive regulation of multicellular organism growth"/>
    <property type="evidence" value="ECO:0000315"/>
    <property type="project" value="FlyBase"/>
</dbReference>
<dbReference type="GO" id="GO:0042594">
    <property type="term" value="P:response to starvation"/>
    <property type="evidence" value="ECO:0000315"/>
    <property type="project" value="FlyBase"/>
</dbReference>
<dbReference type="Gene3D" id="1.10.100.10">
    <property type="entry name" value="Insulin-like"/>
    <property type="match status" value="1"/>
</dbReference>
<dbReference type="InterPro" id="IPR036438">
    <property type="entry name" value="Insulin-like_sf"/>
</dbReference>
<dbReference type="SUPFAM" id="SSF56994">
    <property type="entry name" value="Insulin-like"/>
    <property type="match status" value="1"/>
</dbReference>
<reference evidence="6" key="1">
    <citation type="journal article" date="2000" name="Science">
        <title>The genome sequence of Drosophila melanogaster.</title>
        <authorList>
            <person name="Adams M.D."/>
            <person name="Celniker S.E."/>
            <person name="Holt R.A."/>
            <person name="Evans C.A."/>
            <person name="Gocayne J.D."/>
            <person name="Amanatides P.G."/>
            <person name="Scherer S.E."/>
            <person name="Li P.W."/>
            <person name="Hoskins R.A."/>
            <person name="Galle R.F."/>
            <person name="George R.A."/>
            <person name="Lewis S.E."/>
            <person name="Richards S."/>
            <person name="Ashburner M."/>
            <person name="Henderson S.N."/>
            <person name="Sutton G.G."/>
            <person name="Wortman J.R."/>
            <person name="Yandell M.D."/>
            <person name="Zhang Q."/>
            <person name="Chen L.X."/>
            <person name="Brandon R.C."/>
            <person name="Rogers Y.-H.C."/>
            <person name="Blazej R.G."/>
            <person name="Champe M."/>
            <person name="Pfeiffer B.D."/>
            <person name="Wan K.H."/>
            <person name="Doyle C."/>
            <person name="Baxter E.G."/>
            <person name="Helt G."/>
            <person name="Nelson C.R."/>
            <person name="Miklos G.L.G."/>
            <person name="Abril J.F."/>
            <person name="Agbayani A."/>
            <person name="An H.-J."/>
            <person name="Andrews-Pfannkoch C."/>
            <person name="Baldwin D."/>
            <person name="Ballew R.M."/>
            <person name="Basu A."/>
            <person name="Baxendale J."/>
            <person name="Bayraktaroglu L."/>
            <person name="Beasley E.M."/>
            <person name="Beeson K.Y."/>
            <person name="Benos P.V."/>
            <person name="Berman B.P."/>
            <person name="Bhandari D."/>
            <person name="Bolshakov S."/>
            <person name="Borkova D."/>
            <person name="Botchan M.R."/>
            <person name="Bouck J."/>
            <person name="Brokstein P."/>
            <person name="Brottier P."/>
            <person name="Burtis K.C."/>
            <person name="Busam D.A."/>
            <person name="Butler H."/>
            <person name="Cadieu E."/>
            <person name="Center A."/>
            <person name="Chandra I."/>
            <person name="Cherry J.M."/>
            <person name="Cawley S."/>
            <person name="Dahlke C."/>
            <person name="Davenport L.B."/>
            <person name="Davies P."/>
            <person name="de Pablos B."/>
            <person name="Delcher A."/>
            <person name="Deng Z."/>
            <person name="Mays A.D."/>
            <person name="Dew I."/>
            <person name="Dietz S.M."/>
            <person name="Dodson K."/>
            <person name="Doup L.E."/>
            <person name="Downes M."/>
            <person name="Dugan-Rocha S."/>
            <person name="Dunkov B.C."/>
            <person name="Dunn P."/>
            <person name="Durbin K.J."/>
            <person name="Evangelista C.C."/>
            <person name="Ferraz C."/>
            <person name="Ferriera S."/>
            <person name="Fleischmann W."/>
            <person name="Fosler C."/>
            <person name="Gabrielian A.E."/>
            <person name="Garg N.S."/>
            <person name="Gelbart W.M."/>
            <person name="Glasser K."/>
            <person name="Glodek A."/>
            <person name="Gong F."/>
            <person name="Gorrell J.H."/>
            <person name="Gu Z."/>
            <person name="Guan P."/>
            <person name="Harris M."/>
            <person name="Harris N.L."/>
            <person name="Harvey D.A."/>
            <person name="Heiman T.J."/>
            <person name="Hernandez J.R."/>
            <person name="Houck J."/>
            <person name="Hostin D."/>
            <person name="Houston K.A."/>
            <person name="Howland T.J."/>
            <person name="Wei M.-H."/>
            <person name="Ibegwam C."/>
            <person name="Jalali M."/>
            <person name="Kalush F."/>
            <person name="Karpen G.H."/>
            <person name="Ke Z."/>
            <person name="Kennison J.A."/>
            <person name="Ketchum K.A."/>
            <person name="Kimmel B.E."/>
            <person name="Kodira C.D."/>
            <person name="Kraft C.L."/>
            <person name="Kravitz S."/>
            <person name="Kulp D."/>
            <person name="Lai Z."/>
            <person name="Lasko P."/>
            <person name="Lei Y."/>
            <person name="Levitsky A.A."/>
            <person name="Li J.H."/>
            <person name="Li Z."/>
            <person name="Liang Y."/>
            <person name="Lin X."/>
            <person name="Liu X."/>
            <person name="Mattei B."/>
            <person name="McIntosh T.C."/>
            <person name="McLeod M.P."/>
            <person name="McPherson D."/>
            <person name="Merkulov G."/>
            <person name="Milshina N.V."/>
            <person name="Mobarry C."/>
            <person name="Morris J."/>
            <person name="Moshrefi A."/>
            <person name="Mount S.M."/>
            <person name="Moy M."/>
            <person name="Murphy B."/>
            <person name="Murphy L."/>
            <person name="Muzny D.M."/>
            <person name="Nelson D.L."/>
            <person name="Nelson D.R."/>
            <person name="Nelson K.A."/>
            <person name="Nixon K."/>
            <person name="Nusskern D.R."/>
            <person name="Pacleb J.M."/>
            <person name="Palazzolo M."/>
            <person name="Pittman G.S."/>
            <person name="Pan S."/>
            <person name="Pollard J."/>
            <person name="Puri V."/>
            <person name="Reese M.G."/>
            <person name="Reinert K."/>
            <person name="Remington K."/>
            <person name="Saunders R.D.C."/>
            <person name="Scheeler F."/>
            <person name="Shen H."/>
            <person name="Shue B.C."/>
            <person name="Siden-Kiamos I."/>
            <person name="Simpson M."/>
            <person name="Skupski M.P."/>
            <person name="Smith T.J."/>
            <person name="Spier E."/>
            <person name="Spradling A.C."/>
            <person name="Stapleton M."/>
            <person name="Strong R."/>
            <person name="Sun E."/>
            <person name="Svirskas R."/>
            <person name="Tector C."/>
            <person name="Turner R."/>
            <person name="Venter E."/>
            <person name="Wang A.H."/>
            <person name="Wang X."/>
            <person name="Wang Z.-Y."/>
            <person name="Wassarman D.A."/>
            <person name="Weinstock G.M."/>
            <person name="Weissenbach J."/>
            <person name="Williams S.M."/>
            <person name="Woodage T."/>
            <person name="Worley K.C."/>
            <person name="Wu D."/>
            <person name="Yang S."/>
            <person name="Yao Q.A."/>
            <person name="Ye J."/>
            <person name="Yeh R.-F."/>
            <person name="Zaveri J.S."/>
            <person name="Zhan M."/>
            <person name="Zhang G."/>
            <person name="Zhao Q."/>
            <person name="Zheng L."/>
            <person name="Zheng X.H."/>
            <person name="Zhong F.N."/>
            <person name="Zhong W."/>
            <person name="Zhou X."/>
            <person name="Zhu S.C."/>
            <person name="Zhu X."/>
            <person name="Smith H.O."/>
            <person name="Gibbs R.A."/>
            <person name="Myers E.W."/>
            <person name="Rubin G.M."/>
            <person name="Venter J.C."/>
        </authorList>
    </citation>
    <scope>NUCLEOTIDE SEQUENCE [LARGE SCALE GENOMIC DNA]</scope>
    <source>
        <strain evidence="3">Berkeley</strain>
    </source>
</reference>
<reference evidence="5 6" key="2">
    <citation type="journal article" date="2002" name="Genome Biol.">
        <title>Annotation of the Drosophila melanogaster euchromatic genome: a systematic review.</title>
        <authorList>
            <person name="Misra S."/>
            <person name="Crosby M.A."/>
            <person name="Mungall C.J."/>
            <person name="Matthews B.B."/>
            <person name="Campbell K.S."/>
            <person name="Hradecky P."/>
            <person name="Huang Y."/>
            <person name="Kaminker J.S."/>
            <person name="Millburn G.H."/>
            <person name="Prochnik S.E."/>
            <person name="Smith C.D."/>
            <person name="Tupy J.L."/>
            <person name="Whitfield E.J."/>
            <person name="Bayraktaroglu L."/>
            <person name="Berman B.P."/>
            <person name="Bettencourt B.R."/>
            <person name="Celniker S.E."/>
            <person name="de Grey A.D.N.J."/>
            <person name="Drysdale R.A."/>
            <person name="Harris N.L."/>
            <person name="Richter J."/>
            <person name="Russo S."/>
            <person name="Schroeder A.J."/>
            <person name="Shu S.Q."/>
            <person name="Stapleton M."/>
            <person name="Yamada C."/>
            <person name="Ashburner M."/>
            <person name="Gelbart W.M."/>
            <person name="Rubin G.M."/>
            <person name="Lewis S.E."/>
        </authorList>
    </citation>
    <scope>GENOME REANNOTATION</scope>
    <source>
        <strain>Berkeley</strain>
    </source>
</reference>
<reference key="3">
    <citation type="submission" date="2009-06" db="EMBL/GenBank/DDBJ databases">
        <authorList>
            <person name="Carlson J.W."/>
            <person name="Booth B."/>
            <person name="Frise E."/>
            <person name="Park S."/>
            <person name="Wan K.H."/>
            <person name="Yu C."/>
            <person name="Celniker S.E."/>
        </authorList>
    </citation>
    <scope>NUCLEOTIDE SEQUENCE [LARGE SCALE MRNA]</scope>
    <source>
        <strain>Berkeley</strain>
    </source>
</reference>
<reference evidence="5" key="4">
    <citation type="journal article" date="2001" name="Curr. Biol.">
        <title>An evolutionarily conserved function of the Drosophila insulin receptor and insulin-like peptides in growth control.</title>
        <authorList>
            <person name="Brogiolo W."/>
            <person name="Stocker H."/>
            <person name="Ikeya T."/>
            <person name="Rintelen F."/>
            <person name="Fernandez R."/>
            <person name="Hafen E."/>
        </authorList>
    </citation>
    <scope>IDENTIFICATION</scope>
    <scope>TISSUE SPECIFICITY</scope>
</reference>
<accession>Q9W4Z4</accession>
<accession>C4XVH4</accession>
<proteinExistence type="evidence at transcript level"/>
<protein>
    <recommendedName>
        <fullName evidence="7">Insulin-like peptide 6</fullName>
        <shortName>dILP6</shortName>
    </recommendedName>
    <alternativeName>
        <fullName>Insulin-related peptide 6</fullName>
    </alternativeName>
    <component>
        <recommendedName>
            <fullName>Insulin-like peptide 6 A chain</fullName>
        </recommendedName>
    </component>
    <component>
        <recommendedName>
            <fullName>Insulin-like peptide 6 B chain</fullName>
        </recommendedName>
    </component>
</protein>
<comment type="function">
    <text evidence="5">Possible ligand of InR/insulin-like receptor.</text>
</comment>
<comment type="subunit">
    <text evidence="1">Heterodimer of a B chain and an A chain linked by two disulfide bonds.</text>
</comment>
<comment type="subcellular location">
    <subcellularLocation>
        <location evidence="5">Secreted</location>
    </subcellularLocation>
</comment>
<comment type="tissue specificity">
    <text evidence="4">Expressed at a low level in the larval gut.</text>
</comment>
<comment type="similarity">
    <text evidence="2">Belongs to the insulin family.</text>
</comment>
<sequence length="107" mass="11694">MVLKVPTSKVLLVLATLFAVAAMISSWMPQVAASPLAPTEYEQRRMMCSTGLSDVIQKICVSGTVALGDVFPNSFGKRRKRDLQNVTDLCCKSGGCTYRELLQYCKG</sequence>
<organism evidence="8">
    <name type="scientific">Drosophila melanogaster</name>
    <name type="common">Fruit fly</name>
    <dbReference type="NCBI Taxonomy" id="7227"/>
    <lineage>
        <taxon>Eukaryota</taxon>
        <taxon>Metazoa</taxon>
        <taxon>Ecdysozoa</taxon>
        <taxon>Arthropoda</taxon>
        <taxon>Hexapoda</taxon>
        <taxon>Insecta</taxon>
        <taxon>Pterygota</taxon>
        <taxon>Neoptera</taxon>
        <taxon>Endopterygota</taxon>
        <taxon>Diptera</taxon>
        <taxon>Brachycera</taxon>
        <taxon>Muscomorpha</taxon>
        <taxon>Ephydroidea</taxon>
        <taxon>Drosophilidae</taxon>
        <taxon>Drosophila</taxon>
        <taxon>Sophophora</taxon>
    </lineage>
</organism>
<keyword id="KW-0165">Cleavage on pair of basic residues</keyword>
<keyword id="KW-1015">Disulfide bond</keyword>
<keyword id="KW-1185">Reference proteome</keyword>
<keyword id="KW-0964">Secreted</keyword>
<keyword id="KW-0732">Signal</keyword>